<feature type="chain" id="PRO_0000197204" description="Metallothionein-1A">
    <location>
        <begin position="1"/>
        <end position="61"/>
    </location>
</feature>
<feature type="region of interest" description="Beta">
    <location>
        <begin position="1"/>
        <end position="29"/>
    </location>
</feature>
<feature type="region of interest" description="Alpha">
    <location>
        <begin position="30"/>
        <end position="61"/>
    </location>
</feature>
<feature type="binding site" evidence="1">
    <location>
        <position position="5"/>
    </location>
    <ligand>
        <name>a divalent metal cation</name>
        <dbReference type="ChEBI" id="CHEBI:60240"/>
        <label>1</label>
        <note>in cluster B</note>
    </ligand>
</feature>
<feature type="binding site" evidence="1">
    <location>
        <position position="7"/>
    </location>
    <ligand>
        <name>a divalent metal cation</name>
        <dbReference type="ChEBI" id="CHEBI:60240"/>
        <label>1</label>
        <note>in cluster B</note>
    </ligand>
</feature>
<feature type="binding site" evidence="1">
    <location>
        <position position="7"/>
    </location>
    <ligand>
        <name>a divalent metal cation</name>
        <dbReference type="ChEBI" id="CHEBI:60240"/>
        <label>2</label>
        <note>in cluster B</note>
    </ligand>
</feature>
<feature type="binding site" evidence="1">
    <location>
        <position position="13"/>
    </location>
    <ligand>
        <name>a divalent metal cation</name>
        <dbReference type="ChEBI" id="CHEBI:60240"/>
        <label>2</label>
        <note>in cluster B</note>
    </ligand>
</feature>
<feature type="binding site" evidence="1">
    <location>
        <position position="15"/>
    </location>
    <ligand>
        <name>a divalent metal cation</name>
        <dbReference type="ChEBI" id="CHEBI:60240"/>
        <label>2</label>
        <note>in cluster B</note>
    </ligand>
</feature>
<feature type="binding site" evidence="1">
    <location>
        <position position="15"/>
    </location>
    <ligand>
        <name>a divalent metal cation</name>
        <dbReference type="ChEBI" id="CHEBI:60240"/>
        <label>3</label>
        <note>in cluster B</note>
    </ligand>
</feature>
<feature type="binding site" evidence="1">
    <location>
        <position position="19"/>
    </location>
    <ligand>
        <name>a divalent metal cation</name>
        <dbReference type="ChEBI" id="CHEBI:60240"/>
        <label>3</label>
        <note>in cluster B</note>
    </ligand>
</feature>
<feature type="binding site" evidence="1">
    <location>
        <position position="21"/>
    </location>
    <ligand>
        <name>a divalent metal cation</name>
        <dbReference type="ChEBI" id="CHEBI:60240"/>
        <label>1</label>
        <note>in cluster B</note>
    </ligand>
</feature>
<feature type="binding site" evidence="1">
    <location>
        <position position="24"/>
    </location>
    <ligand>
        <name>a divalent metal cation</name>
        <dbReference type="ChEBI" id="CHEBI:60240"/>
        <label>1</label>
        <note>in cluster B</note>
    </ligand>
</feature>
<feature type="binding site" evidence="1">
    <location>
        <position position="24"/>
    </location>
    <ligand>
        <name>a divalent metal cation</name>
        <dbReference type="ChEBI" id="CHEBI:60240"/>
        <label>3</label>
        <note>in cluster B</note>
    </ligand>
</feature>
<feature type="binding site" evidence="1">
    <location>
        <position position="26"/>
    </location>
    <ligand>
        <name>a divalent metal cation</name>
        <dbReference type="ChEBI" id="CHEBI:60240"/>
        <label>2</label>
        <note>in cluster B</note>
    </ligand>
</feature>
<feature type="binding site" evidence="1">
    <location>
        <position position="29"/>
    </location>
    <ligand>
        <name>a divalent metal cation</name>
        <dbReference type="ChEBI" id="CHEBI:60240"/>
        <label>3</label>
        <note>in cluster B</note>
    </ligand>
</feature>
<feature type="binding site" evidence="1">
    <location>
        <position position="33"/>
    </location>
    <ligand>
        <name>a divalent metal cation</name>
        <dbReference type="ChEBI" id="CHEBI:60240"/>
        <label>4</label>
        <note>in cluster A</note>
    </ligand>
</feature>
<feature type="binding site" evidence="1">
    <location>
        <position position="34"/>
    </location>
    <ligand>
        <name>a divalent metal cation</name>
        <dbReference type="ChEBI" id="CHEBI:60240"/>
        <label>4</label>
        <note>in cluster A</note>
    </ligand>
</feature>
<feature type="binding site" evidence="1">
    <location>
        <position position="34"/>
    </location>
    <ligand>
        <name>a divalent metal cation</name>
        <dbReference type="ChEBI" id="CHEBI:60240"/>
        <label>5</label>
        <note>in cluster A</note>
    </ligand>
</feature>
<feature type="binding site" evidence="1">
    <location>
        <position position="36"/>
    </location>
    <ligand>
        <name>a divalent metal cation</name>
        <dbReference type="ChEBI" id="CHEBI:60240"/>
        <label>5</label>
        <note>in cluster A</note>
    </ligand>
</feature>
<feature type="binding site" evidence="1">
    <location>
        <position position="37"/>
    </location>
    <ligand>
        <name>a divalent metal cation</name>
        <dbReference type="ChEBI" id="CHEBI:60240"/>
        <label>5</label>
        <note>in cluster A</note>
    </ligand>
</feature>
<feature type="binding site" evidence="1">
    <location>
        <position position="37"/>
    </location>
    <ligand>
        <name>a divalent metal cation</name>
        <dbReference type="ChEBI" id="CHEBI:60240"/>
        <label>6</label>
        <note>in cluster A</note>
    </ligand>
</feature>
<feature type="binding site" evidence="1">
    <location>
        <position position="41"/>
    </location>
    <ligand>
        <name>a divalent metal cation</name>
        <dbReference type="ChEBI" id="CHEBI:60240"/>
        <label>6</label>
        <note>in cluster A</note>
    </ligand>
</feature>
<feature type="binding site" evidence="1">
    <location>
        <position position="44"/>
    </location>
    <ligand>
        <name>a divalent metal cation</name>
        <dbReference type="ChEBI" id="CHEBI:60240"/>
        <label>4</label>
        <note>in cluster A</note>
    </ligand>
</feature>
<feature type="binding site" evidence="1">
    <location>
        <position position="44"/>
    </location>
    <ligand>
        <name>a divalent metal cation</name>
        <dbReference type="ChEBI" id="CHEBI:60240"/>
        <label>6</label>
        <note>in cluster A</note>
    </ligand>
</feature>
<feature type="binding site" evidence="1">
    <location>
        <position position="48"/>
    </location>
    <ligand>
        <name>a divalent metal cation</name>
        <dbReference type="ChEBI" id="CHEBI:60240"/>
        <label>4</label>
        <note>in cluster A</note>
    </ligand>
</feature>
<feature type="binding site" evidence="1">
    <location>
        <position position="50"/>
    </location>
    <ligand>
        <name>a divalent metal cation</name>
        <dbReference type="ChEBI" id="CHEBI:60240"/>
        <label>5</label>
        <note>in cluster A</note>
    </ligand>
</feature>
<feature type="binding site" evidence="1">
    <location>
        <position position="50"/>
    </location>
    <ligand>
        <name>a divalent metal cation</name>
        <dbReference type="ChEBI" id="CHEBI:60240"/>
        <label>7</label>
        <note>in cluster A</note>
    </ligand>
</feature>
<feature type="binding site" evidence="1">
    <location>
        <position position="57"/>
    </location>
    <ligand>
        <name>a divalent metal cation</name>
        <dbReference type="ChEBI" id="CHEBI:60240"/>
        <label>7</label>
        <note>in cluster A</note>
    </ligand>
</feature>
<feature type="binding site" evidence="1">
    <location>
        <position position="59"/>
    </location>
    <ligand>
        <name>a divalent metal cation</name>
        <dbReference type="ChEBI" id="CHEBI:60240"/>
        <label>7</label>
        <note>in cluster A</note>
    </ligand>
</feature>
<feature type="binding site" evidence="1">
    <location>
        <position position="60"/>
    </location>
    <ligand>
        <name>a divalent metal cation</name>
        <dbReference type="ChEBI" id="CHEBI:60240"/>
        <label>6</label>
        <note>in cluster A</note>
    </ligand>
</feature>
<feature type="binding site" evidence="1">
    <location>
        <position position="60"/>
    </location>
    <ligand>
        <name>a divalent metal cation</name>
        <dbReference type="ChEBI" id="CHEBI:60240"/>
        <label>7</label>
        <note>in cluster A</note>
    </ligand>
</feature>
<feature type="modified residue" description="N-acetylmethionine" evidence="2">
    <location>
        <position position="1"/>
    </location>
</feature>
<feature type="modified residue" description="Phosphoserine" evidence="1">
    <location>
        <position position="58"/>
    </location>
</feature>
<feature type="sequence variant" evidence="3">
    <original>G</original>
    <variation>R</variation>
    <location>
        <position position="39"/>
    </location>
</feature>
<feature type="sequence variant">
    <original>S</original>
    <variation>L</variation>
    <location>
        <position position="54"/>
    </location>
</feature>
<dbReference type="PIR" id="A03277">
    <property type="entry name" value="SMHO1A"/>
</dbReference>
<dbReference type="RefSeq" id="XP_023492790.1">
    <property type="nucleotide sequence ID" value="XM_023637022.2"/>
</dbReference>
<dbReference type="SMR" id="P02800"/>
<dbReference type="STRING" id="9796.ENSECAP00000001229"/>
<dbReference type="PaxDb" id="9796-ENSECAP00000001229"/>
<dbReference type="PeptideAtlas" id="P02800"/>
<dbReference type="GeneID" id="100630653"/>
<dbReference type="InParanoid" id="P02800"/>
<dbReference type="OMA" id="GCESACK"/>
<dbReference type="Proteomes" id="UP000002281">
    <property type="component" value="Chromosome 3"/>
</dbReference>
<dbReference type="Bgee" id="ENSECAG00000028889">
    <property type="expression patterns" value="Expressed in liver and 23 other cell types or tissues"/>
</dbReference>
<dbReference type="GO" id="GO:0005737">
    <property type="term" value="C:cytoplasm"/>
    <property type="evidence" value="ECO:0000250"/>
    <property type="project" value="UniProtKB"/>
</dbReference>
<dbReference type="GO" id="GO:0005634">
    <property type="term" value="C:nucleus"/>
    <property type="evidence" value="ECO:0000250"/>
    <property type="project" value="UniProtKB"/>
</dbReference>
<dbReference type="GO" id="GO:0046872">
    <property type="term" value="F:metal ion binding"/>
    <property type="evidence" value="ECO:0000318"/>
    <property type="project" value="GO_Central"/>
</dbReference>
<dbReference type="GO" id="GO:0008270">
    <property type="term" value="F:zinc ion binding"/>
    <property type="evidence" value="ECO:0000250"/>
    <property type="project" value="UniProtKB"/>
</dbReference>
<dbReference type="GO" id="GO:0071276">
    <property type="term" value="P:cellular response to cadmium ion"/>
    <property type="evidence" value="ECO:0000318"/>
    <property type="project" value="GO_Central"/>
</dbReference>
<dbReference type="GO" id="GO:0071280">
    <property type="term" value="P:cellular response to copper ion"/>
    <property type="evidence" value="ECO:0000318"/>
    <property type="project" value="GO_Central"/>
</dbReference>
<dbReference type="GO" id="GO:0071294">
    <property type="term" value="P:cellular response to zinc ion"/>
    <property type="evidence" value="ECO:0000250"/>
    <property type="project" value="UniProtKB"/>
</dbReference>
<dbReference type="GO" id="GO:0010273">
    <property type="term" value="P:detoxification of copper ion"/>
    <property type="evidence" value="ECO:0000318"/>
    <property type="project" value="GO_Central"/>
</dbReference>
<dbReference type="GO" id="GO:0006882">
    <property type="term" value="P:intracellular zinc ion homeostasis"/>
    <property type="evidence" value="ECO:0000318"/>
    <property type="project" value="GO_Central"/>
</dbReference>
<dbReference type="GO" id="GO:0045926">
    <property type="term" value="P:negative regulation of growth"/>
    <property type="evidence" value="ECO:0000250"/>
    <property type="project" value="UniProtKB"/>
</dbReference>
<dbReference type="FunFam" id="4.10.10.10:FF:000001">
    <property type="entry name" value="Metallothionein"/>
    <property type="match status" value="1"/>
</dbReference>
<dbReference type="Gene3D" id="4.10.10.10">
    <property type="entry name" value="Metallothionein Isoform II"/>
    <property type="match status" value="1"/>
</dbReference>
<dbReference type="InterPro" id="IPR017854">
    <property type="entry name" value="Metalthion_dom_sf"/>
</dbReference>
<dbReference type="InterPro" id="IPR023587">
    <property type="entry name" value="Metalthion_dom_sf_vert"/>
</dbReference>
<dbReference type="InterPro" id="IPR000006">
    <property type="entry name" value="Metalthion_vert"/>
</dbReference>
<dbReference type="InterPro" id="IPR018064">
    <property type="entry name" value="Metalthion_vert_metal_BS"/>
</dbReference>
<dbReference type="PANTHER" id="PTHR23299">
    <property type="entry name" value="METALLOTHIONEIN"/>
    <property type="match status" value="1"/>
</dbReference>
<dbReference type="PANTHER" id="PTHR23299:SF22">
    <property type="entry name" value="METALLOTHIONEIN-1G"/>
    <property type="match status" value="1"/>
</dbReference>
<dbReference type="Pfam" id="PF00131">
    <property type="entry name" value="Metallothio"/>
    <property type="match status" value="1"/>
</dbReference>
<dbReference type="PRINTS" id="PR00860">
    <property type="entry name" value="MTVERTEBRATE"/>
</dbReference>
<dbReference type="SUPFAM" id="SSF57868">
    <property type="entry name" value="Metallothionein"/>
    <property type="match status" value="1"/>
</dbReference>
<dbReference type="PROSITE" id="PS00203">
    <property type="entry name" value="METALLOTHIONEIN_VRT"/>
    <property type="match status" value="1"/>
</dbReference>
<protein>
    <recommendedName>
        <fullName>Metallothionein-1A</fullName>
        <shortName>MT-1A</shortName>
    </recommendedName>
    <alternativeName>
        <fullName>Metallothionein-IA</fullName>
        <shortName>MT-IA</shortName>
    </alternativeName>
</protein>
<proteinExistence type="evidence at protein level"/>
<comment type="function">
    <text>Metallothioneins have a high content of cysteine residues that bind various heavy metals; these proteins are transcriptionally regulated by both heavy metals and glucocorticoids.</text>
</comment>
<comment type="subunit">
    <text>Monomer.</text>
</comment>
<comment type="domain">
    <text>Class I metallothioneins contain 2 metal-binding domains: four divalent ions are chelated within cluster A of the alpha domain and are coordinated via cysteinyl thiolate bridges to 11 cysteine ligands. Cluster B, the corresponding region within the beta domain, can ligate three divalent ions to 9 cysteines.</text>
</comment>
<comment type="similarity">
    <text evidence="4">Belongs to the metallothionein superfamily. Type 1 family.</text>
</comment>
<name>MT1A_HORSE</name>
<reference key="1">
    <citation type="journal article" date="1978" name="Trends Biochem. Sci.">
        <title>Metallothionein.</title>
        <authorList>
            <person name="Kojima Y."/>
            <person name="Kaegi J.H.R."/>
        </authorList>
    </citation>
    <scope>PROTEIN SEQUENCE</scope>
    <source>
        <tissue>Kidney</tissue>
        <tissue>Liver</tissue>
    </source>
</reference>
<reference key="2">
    <citation type="journal article" date="1987" name="Experientia Suppl.">
        <title>Chemistry and biochemistry of metallothionein.</title>
        <authorList>
            <person name="Kaegi J.H.R."/>
            <person name="Kojima Y."/>
        </authorList>
    </citation>
    <scope>SEQUENCE REVISION TO 60</scope>
    <scope>VARIANT ARG-39</scope>
</reference>
<evidence type="ECO:0000250" key="1">
    <source>
        <dbReference type="UniProtKB" id="P02795"/>
    </source>
</evidence>
<evidence type="ECO:0000250" key="2">
    <source>
        <dbReference type="UniProtKB" id="P11957"/>
    </source>
</evidence>
<evidence type="ECO:0000269" key="3">
    <source>
    </source>
</evidence>
<evidence type="ECO:0000305" key="4"/>
<organism>
    <name type="scientific">Equus caballus</name>
    <name type="common">Horse</name>
    <dbReference type="NCBI Taxonomy" id="9796"/>
    <lineage>
        <taxon>Eukaryota</taxon>
        <taxon>Metazoa</taxon>
        <taxon>Chordata</taxon>
        <taxon>Craniata</taxon>
        <taxon>Vertebrata</taxon>
        <taxon>Euteleostomi</taxon>
        <taxon>Mammalia</taxon>
        <taxon>Eutheria</taxon>
        <taxon>Laurasiatheria</taxon>
        <taxon>Perissodactyla</taxon>
        <taxon>Equidae</taxon>
        <taxon>Equus</taxon>
    </lineage>
</organism>
<keyword id="KW-0007">Acetylation</keyword>
<keyword id="KW-0903">Direct protein sequencing</keyword>
<keyword id="KW-0479">Metal-binding</keyword>
<keyword id="KW-0480">Metal-thiolate cluster</keyword>
<keyword id="KW-0597">Phosphoprotein</keyword>
<keyword id="KW-1185">Reference proteome</keyword>
<accession>P02800</accession>
<sequence>MDPNCSCPTGGSCTCAGSCKCKECRCTSCKKSCCSCCPGGCARCAQGCVCKGASDKCSCCA</sequence>